<comment type="function">
    <text evidence="1">Cilium- and flagellum-specific protein that plays a role in axonemal structure organization and motility. May play a role in outer and inner dynein arm assembly.</text>
</comment>
<comment type="subunit">
    <text evidence="2">Interacts with DNAAF2.</text>
</comment>
<comment type="subcellular location">
    <subcellularLocation>
        <location evidence="1">Cytoplasm</location>
    </subcellularLocation>
    <subcellularLocation>
        <location evidence="1">Cytoplasm</location>
        <location evidence="1">Cytoskeleton</location>
        <location evidence="1">Cilium axoneme</location>
    </subcellularLocation>
</comment>
<comment type="tissue specificity">
    <text evidence="3">Expressed in the left-right organiser (LRO) node at 8.25 dpc.</text>
</comment>
<comment type="similarity">
    <text evidence="4">Belongs to the CFAP300 family.</text>
</comment>
<proteinExistence type="evidence at transcript level"/>
<protein>
    <recommendedName>
        <fullName evidence="4">Cilia- and flagella-associated protein 300</fullName>
    </recommendedName>
</protein>
<feature type="chain" id="PRO_0000444628" description="Cilia- and flagella-associated protein 300">
    <location>
        <begin position="1"/>
        <end position="267"/>
    </location>
</feature>
<keyword id="KW-0966">Cell projection</keyword>
<keyword id="KW-0963">Cytoplasm</keyword>
<keyword id="KW-0206">Cytoskeleton</keyword>
<keyword id="KW-1185">Reference proteome</keyword>
<evidence type="ECO:0000250" key="1">
    <source>
        <dbReference type="UniProtKB" id="A0CY51"/>
    </source>
</evidence>
<evidence type="ECO:0000250" key="2">
    <source>
        <dbReference type="UniProtKB" id="Q9BRQ4"/>
    </source>
</evidence>
<evidence type="ECO:0000269" key="3">
    <source>
    </source>
</evidence>
<evidence type="ECO:0000305" key="4"/>
<accession>Q8CC70</accession>
<organism>
    <name type="scientific">Mus musculus</name>
    <name type="common">Mouse</name>
    <dbReference type="NCBI Taxonomy" id="10090"/>
    <lineage>
        <taxon>Eukaryota</taxon>
        <taxon>Metazoa</taxon>
        <taxon>Chordata</taxon>
        <taxon>Craniata</taxon>
        <taxon>Vertebrata</taxon>
        <taxon>Euteleostomi</taxon>
        <taxon>Mammalia</taxon>
        <taxon>Eutheria</taxon>
        <taxon>Euarchontoglires</taxon>
        <taxon>Glires</taxon>
        <taxon>Rodentia</taxon>
        <taxon>Myomorpha</taxon>
        <taxon>Muroidea</taxon>
        <taxon>Muridae</taxon>
        <taxon>Murinae</taxon>
        <taxon>Mus</taxon>
        <taxon>Mus</taxon>
    </lineage>
</organism>
<sequence length="267" mass="30901">MAAGEPRDGGGYYFRFLPHRTFSSLSAREITSRLRQWSMLGRIQAQAFSFDQTFQPYQKDDFVMAFFKDPNVIPNLQLLSDSSGQWTTLGSEVKKIEAINVPCTQLSMSFFQRLYDENIVRESGHIVKCLDSFCDPFLISDELRKVLLMEDSEKYEVFSPVEREEFLFCLFKHLCLGGSLCQYEDVLKPYLETAKLIYKDLVSVRKHPRTKEIQITSSVFKVKAYDSVGVCYPSPKEHEQTFSYFVVDPIKRHVNVLYHCYGVGHMA</sequence>
<dbReference type="EMBL" id="AK033793">
    <property type="protein sequence ID" value="BAC28476.1"/>
    <property type="molecule type" value="mRNA"/>
</dbReference>
<dbReference type="EMBL" id="AC139885">
    <property type="status" value="NOT_ANNOTATED_CDS"/>
    <property type="molecule type" value="Genomic_DNA"/>
</dbReference>
<dbReference type="EMBL" id="CH466522">
    <property type="protein sequence ID" value="EDL24952.1"/>
    <property type="molecule type" value="Genomic_DNA"/>
</dbReference>
<dbReference type="CCDS" id="CCDS22813.1"/>
<dbReference type="RefSeq" id="NP_950182.1">
    <property type="nucleotide sequence ID" value="NM_199017.3"/>
</dbReference>
<dbReference type="FunCoup" id="Q8CC70">
    <property type="interactions" value="8"/>
</dbReference>
<dbReference type="STRING" id="10090.ENSMUSP00000063450"/>
<dbReference type="iPTMnet" id="Q8CC70"/>
<dbReference type="PhosphoSitePlus" id="Q8CC70"/>
<dbReference type="SwissPalm" id="Q8CC70"/>
<dbReference type="REPRODUCTION-2DPAGE" id="IPI00228468"/>
<dbReference type="PaxDb" id="10090-ENSMUSP00000063450"/>
<dbReference type="ProteomicsDB" id="340775"/>
<dbReference type="Pumba" id="Q8CC70"/>
<dbReference type="Antibodypedia" id="45426">
    <property type="antibodies" value="45 antibodies from 15 providers"/>
</dbReference>
<dbReference type="DNASU" id="234912"/>
<dbReference type="Ensembl" id="ENSMUST00000065291.2">
    <property type="protein sequence ID" value="ENSMUSP00000063450.2"/>
    <property type="gene ID" value="ENSMUSG00000053070.6"/>
</dbReference>
<dbReference type="GeneID" id="234912"/>
<dbReference type="KEGG" id="mmu:234912"/>
<dbReference type="UCSC" id="uc009odh.1">
    <property type="organism name" value="mouse"/>
</dbReference>
<dbReference type="AGR" id="MGI:3045346"/>
<dbReference type="CTD" id="85016"/>
<dbReference type="MGI" id="MGI:3045346">
    <property type="gene designation" value="Cfap300"/>
</dbReference>
<dbReference type="VEuPathDB" id="HostDB:ENSMUSG00000053070"/>
<dbReference type="eggNOG" id="ENOG502QUFH">
    <property type="taxonomic scope" value="Eukaryota"/>
</dbReference>
<dbReference type="GeneTree" id="ENSGT00510000047559"/>
<dbReference type="HOGENOM" id="CLU_068703_0_0_1"/>
<dbReference type="InParanoid" id="Q8CC70"/>
<dbReference type="OMA" id="FYHCYGV"/>
<dbReference type="OrthoDB" id="10259249at2759"/>
<dbReference type="PhylomeDB" id="Q8CC70"/>
<dbReference type="TreeFam" id="TF329188"/>
<dbReference type="BioGRID-ORCS" id="234912">
    <property type="hits" value="0 hits in 77 CRISPR screens"/>
</dbReference>
<dbReference type="PRO" id="PR:Q8CC70"/>
<dbReference type="Proteomes" id="UP000000589">
    <property type="component" value="Chromosome 9"/>
</dbReference>
<dbReference type="RNAct" id="Q8CC70">
    <property type="molecule type" value="protein"/>
</dbReference>
<dbReference type="Bgee" id="ENSMUSG00000053070">
    <property type="expression patterns" value="Expressed in spermatocyte and 168 other cell types or tissues"/>
</dbReference>
<dbReference type="ExpressionAtlas" id="Q8CC70">
    <property type="expression patterns" value="baseline and differential"/>
</dbReference>
<dbReference type="GO" id="GO:0005737">
    <property type="term" value="C:cytoplasm"/>
    <property type="evidence" value="ECO:0000250"/>
    <property type="project" value="UniProtKB"/>
</dbReference>
<dbReference type="GO" id="GO:0005856">
    <property type="term" value="C:cytoskeleton"/>
    <property type="evidence" value="ECO:0007669"/>
    <property type="project" value="UniProtKB-KW"/>
</dbReference>
<dbReference type="GO" id="GO:0031514">
    <property type="term" value="C:motile cilium"/>
    <property type="evidence" value="ECO:0000250"/>
    <property type="project" value="UniProtKB"/>
</dbReference>
<dbReference type="InterPro" id="IPR029416">
    <property type="entry name" value="CFAP300"/>
</dbReference>
<dbReference type="PANTHER" id="PTHR31078">
    <property type="entry name" value="CILIA- AND FLAGELLA-ASSOCIATED PROTEIN 300"/>
    <property type="match status" value="1"/>
</dbReference>
<dbReference type="PANTHER" id="PTHR31078:SF1">
    <property type="entry name" value="CILIA- AND FLAGELLA-ASSOCIATED PROTEIN 300"/>
    <property type="match status" value="1"/>
</dbReference>
<dbReference type="Pfam" id="PF14926">
    <property type="entry name" value="CFAP300"/>
    <property type="match status" value="1"/>
</dbReference>
<reference key="1">
    <citation type="journal article" date="2005" name="Science">
        <title>The transcriptional landscape of the mammalian genome.</title>
        <authorList>
            <person name="Carninci P."/>
            <person name="Kasukawa T."/>
            <person name="Katayama S."/>
            <person name="Gough J."/>
            <person name="Frith M.C."/>
            <person name="Maeda N."/>
            <person name="Oyama R."/>
            <person name="Ravasi T."/>
            <person name="Lenhard B."/>
            <person name="Wells C."/>
            <person name="Kodzius R."/>
            <person name="Shimokawa K."/>
            <person name="Bajic V.B."/>
            <person name="Brenner S.E."/>
            <person name="Batalov S."/>
            <person name="Forrest A.R."/>
            <person name="Zavolan M."/>
            <person name="Davis M.J."/>
            <person name="Wilming L.G."/>
            <person name="Aidinis V."/>
            <person name="Allen J.E."/>
            <person name="Ambesi-Impiombato A."/>
            <person name="Apweiler R."/>
            <person name="Aturaliya R.N."/>
            <person name="Bailey T.L."/>
            <person name="Bansal M."/>
            <person name="Baxter L."/>
            <person name="Beisel K.W."/>
            <person name="Bersano T."/>
            <person name="Bono H."/>
            <person name="Chalk A.M."/>
            <person name="Chiu K.P."/>
            <person name="Choudhary V."/>
            <person name="Christoffels A."/>
            <person name="Clutterbuck D.R."/>
            <person name="Crowe M.L."/>
            <person name="Dalla E."/>
            <person name="Dalrymple B.P."/>
            <person name="de Bono B."/>
            <person name="Della Gatta G."/>
            <person name="di Bernardo D."/>
            <person name="Down T."/>
            <person name="Engstrom P."/>
            <person name="Fagiolini M."/>
            <person name="Faulkner G."/>
            <person name="Fletcher C.F."/>
            <person name="Fukushima T."/>
            <person name="Furuno M."/>
            <person name="Futaki S."/>
            <person name="Gariboldi M."/>
            <person name="Georgii-Hemming P."/>
            <person name="Gingeras T.R."/>
            <person name="Gojobori T."/>
            <person name="Green R.E."/>
            <person name="Gustincich S."/>
            <person name="Harbers M."/>
            <person name="Hayashi Y."/>
            <person name="Hensch T.K."/>
            <person name="Hirokawa N."/>
            <person name="Hill D."/>
            <person name="Huminiecki L."/>
            <person name="Iacono M."/>
            <person name="Ikeo K."/>
            <person name="Iwama A."/>
            <person name="Ishikawa T."/>
            <person name="Jakt M."/>
            <person name="Kanapin A."/>
            <person name="Katoh M."/>
            <person name="Kawasawa Y."/>
            <person name="Kelso J."/>
            <person name="Kitamura H."/>
            <person name="Kitano H."/>
            <person name="Kollias G."/>
            <person name="Krishnan S.P."/>
            <person name="Kruger A."/>
            <person name="Kummerfeld S.K."/>
            <person name="Kurochkin I.V."/>
            <person name="Lareau L.F."/>
            <person name="Lazarevic D."/>
            <person name="Lipovich L."/>
            <person name="Liu J."/>
            <person name="Liuni S."/>
            <person name="McWilliam S."/>
            <person name="Madan Babu M."/>
            <person name="Madera M."/>
            <person name="Marchionni L."/>
            <person name="Matsuda H."/>
            <person name="Matsuzawa S."/>
            <person name="Miki H."/>
            <person name="Mignone F."/>
            <person name="Miyake S."/>
            <person name="Morris K."/>
            <person name="Mottagui-Tabar S."/>
            <person name="Mulder N."/>
            <person name="Nakano N."/>
            <person name="Nakauchi H."/>
            <person name="Ng P."/>
            <person name="Nilsson R."/>
            <person name="Nishiguchi S."/>
            <person name="Nishikawa S."/>
            <person name="Nori F."/>
            <person name="Ohara O."/>
            <person name="Okazaki Y."/>
            <person name="Orlando V."/>
            <person name="Pang K.C."/>
            <person name="Pavan W.J."/>
            <person name="Pavesi G."/>
            <person name="Pesole G."/>
            <person name="Petrovsky N."/>
            <person name="Piazza S."/>
            <person name="Reed J."/>
            <person name="Reid J.F."/>
            <person name="Ring B.Z."/>
            <person name="Ringwald M."/>
            <person name="Rost B."/>
            <person name="Ruan Y."/>
            <person name="Salzberg S.L."/>
            <person name="Sandelin A."/>
            <person name="Schneider C."/>
            <person name="Schoenbach C."/>
            <person name="Sekiguchi K."/>
            <person name="Semple C.A."/>
            <person name="Seno S."/>
            <person name="Sessa L."/>
            <person name="Sheng Y."/>
            <person name="Shibata Y."/>
            <person name="Shimada H."/>
            <person name="Shimada K."/>
            <person name="Silva D."/>
            <person name="Sinclair B."/>
            <person name="Sperling S."/>
            <person name="Stupka E."/>
            <person name="Sugiura K."/>
            <person name="Sultana R."/>
            <person name="Takenaka Y."/>
            <person name="Taki K."/>
            <person name="Tammoja K."/>
            <person name="Tan S.L."/>
            <person name="Tang S."/>
            <person name="Taylor M.S."/>
            <person name="Tegner J."/>
            <person name="Teichmann S.A."/>
            <person name="Ueda H.R."/>
            <person name="van Nimwegen E."/>
            <person name="Verardo R."/>
            <person name="Wei C.L."/>
            <person name="Yagi K."/>
            <person name="Yamanishi H."/>
            <person name="Zabarovsky E."/>
            <person name="Zhu S."/>
            <person name="Zimmer A."/>
            <person name="Hide W."/>
            <person name="Bult C."/>
            <person name="Grimmond S.M."/>
            <person name="Teasdale R.D."/>
            <person name="Liu E.T."/>
            <person name="Brusic V."/>
            <person name="Quackenbush J."/>
            <person name="Wahlestedt C."/>
            <person name="Mattick J.S."/>
            <person name="Hume D.A."/>
            <person name="Kai C."/>
            <person name="Sasaki D."/>
            <person name="Tomaru Y."/>
            <person name="Fukuda S."/>
            <person name="Kanamori-Katayama M."/>
            <person name="Suzuki M."/>
            <person name="Aoki J."/>
            <person name="Arakawa T."/>
            <person name="Iida J."/>
            <person name="Imamura K."/>
            <person name="Itoh M."/>
            <person name="Kato T."/>
            <person name="Kawaji H."/>
            <person name="Kawagashira N."/>
            <person name="Kawashima T."/>
            <person name="Kojima M."/>
            <person name="Kondo S."/>
            <person name="Konno H."/>
            <person name="Nakano K."/>
            <person name="Ninomiya N."/>
            <person name="Nishio T."/>
            <person name="Okada M."/>
            <person name="Plessy C."/>
            <person name="Shibata K."/>
            <person name="Shiraki T."/>
            <person name="Suzuki S."/>
            <person name="Tagami M."/>
            <person name="Waki K."/>
            <person name="Watahiki A."/>
            <person name="Okamura-Oho Y."/>
            <person name="Suzuki H."/>
            <person name="Kawai J."/>
            <person name="Hayashizaki Y."/>
        </authorList>
    </citation>
    <scope>NUCLEOTIDE SEQUENCE [LARGE SCALE MRNA]</scope>
    <source>
        <strain>C57BL/6J</strain>
        <tissue>Epididymis</tissue>
    </source>
</reference>
<reference key="2">
    <citation type="journal article" date="2009" name="PLoS Biol.">
        <title>Lineage-specific biology revealed by a finished genome assembly of the mouse.</title>
        <authorList>
            <person name="Church D.M."/>
            <person name="Goodstadt L."/>
            <person name="Hillier L.W."/>
            <person name="Zody M.C."/>
            <person name="Goldstein S."/>
            <person name="She X."/>
            <person name="Bult C.J."/>
            <person name="Agarwala R."/>
            <person name="Cherry J.L."/>
            <person name="DiCuccio M."/>
            <person name="Hlavina W."/>
            <person name="Kapustin Y."/>
            <person name="Meric P."/>
            <person name="Maglott D."/>
            <person name="Birtle Z."/>
            <person name="Marques A.C."/>
            <person name="Graves T."/>
            <person name="Zhou S."/>
            <person name="Teague B."/>
            <person name="Potamousis K."/>
            <person name="Churas C."/>
            <person name="Place M."/>
            <person name="Herschleb J."/>
            <person name="Runnheim R."/>
            <person name="Forrest D."/>
            <person name="Amos-Landgraf J."/>
            <person name="Schwartz D.C."/>
            <person name="Cheng Z."/>
            <person name="Lindblad-Toh K."/>
            <person name="Eichler E.E."/>
            <person name="Ponting C.P."/>
        </authorList>
    </citation>
    <scope>NUCLEOTIDE SEQUENCE [LARGE SCALE GENOMIC DNA]</scope>
    <source>
        <strain>C57BL/6J</strain>
    </source>
</reference>
<reference key="3">
    <citation type="submission" date="2005-07" db="EMBL/GenBank/DDBJ databases">
        <authorList>
            <person name="Mural R.J."/>
            <person name="Adams M.D."/>
            <person name="Myers E.W."/>
            <person name="Smith H.O."/>
            <person name="Venter J.C."/>
        </authorList>
    </citation>
    <scope>NUCLEOTIDE SEQUENCE [LARGE SCALE GENOMIC DNA]</scope>
</reference>
<reference key="4">
    <citation type="journal article" date="2018" name="Am. J. Hum. Genet.">
        <title>Mutations in C11orf70 cause primary ciliary dyskinesia with randomization of left/right body asymmetry due to defects of outer and inner dynein arms.</title>
        <authorList>
            <person name="Hoeben I.M."/>
            <person name="Hjeij R."/>
            <person name="Olbrich H."/>
            <person name="Dougherty G.W."/>
            <person name="Noethe-Menchen T."/>
            <person name="Aprea I."/>
            <person name="Frank D."/>
            <person name="Pennekamp P."/>
            <person name="Dworniczak B."/>
            <person name="Wallmeier J."/>
            <person name="Raidt J."/>
            <person name="Nielsen K.G."/>
            <person name="Philipsen M.C."/>
            <person name="Santamaria F."/>
            <person name="Venditto L."/>
            <person name="Amirav I."/>
            <person name="Mussaffi H."/>
            <person name="Prenzel F."/>
            <person name="Wu K."/>
            <person name="Bakey Z."/>
            <person name="Schmidts M."/>
            <person name="Loges N.T."/>
            <person name="Omran H."/>
        </authorList>
    </citation>
    <scope>TISSUE SPECIFICITY</scope>
</reference>
<gene>
    <name evidence="2" type="primary">Cfap300</name>
</gene>
<name>CF300_MOUSE</name>